<organism>
    <name type="scientific">Escherichia coli O157:H7</name>
    <dbReference type="NCBI Taxonomy" id="83334"/>
    <lineage>
        <taxon>Bacteria</taxon>
        <taxon>Pseudomonadati</taxon>
        <taxon>Pseudomonadota</taxon>
        <taxon>Gammaproteobacteria</taxon>
        <taxon>Enterobacterales</taxon>
        <taxon>Enterobacteriaceae</taxon>
        <taxon>Escherichia</taxon>
    </lineage>
</organism>
<reference key="1">
    <citation type="journal article" date="2001" name="Nature">
        <title>Genome sequence of enterohaemorrhagic Escherichia coli O157:H7.</title>
        <authorList>
            <person name="Perna N.T."/>
            <person name="Plunkett G. III"/>
            <person name="Burland V."/>
            <person name="Mau B."/>
            <person name="Glasner J.D."/>
            <person name="Rose D.J."/>
            <person name="Mayhew G.F."/>
            <person name="Evans P.S."/>
            <person name="Gregor J."/>
            <person name="Kirkpatrick H.A."/>
            <person name="Posfai G."/>
            <person name="Hackett J."/>
            <person name="Klink S."/>
            <person name="Boutin A."/>
            <person name="Shao Y."/>
            <person name="Miller L."/>
            <person name="Grotbeck E.J."/>
            <person name="Davis N.W."/>
            <person name="Lim A."/>
            <person name="Dimalanta E.T."/>
            <person name="Potamousis K."/>
            <person name="Apodaca J."/>
            <person name="Anantharaman T.S."/>
            <person name="Lin J."/>
            <person name="Yen G."/>
            <person name="Schwartz D.C."/>
            <person name="Welch R.A."/>
            <person name="Blattner F.R."/>
        </authorList>
    </citation>
    <scope>NUCLEOTIDE SEQUENCE [LARGE SCALE GENOMIC DNA]</scope>
    <source>
        <strain>O157:H7 / EDL933 / ATCC 700927 / EHEC</strain>
    </source>
</reference>
<reference key="2">
    <citation type="journal article" date="2001" name="DNA Res.">
        <title>Complete genome sequence of enterohemorrhagic Escherichia coli O157:H7 and genomic comparison with a laboratory strain K-12.</title>
        <authorList>
            <person name="Hayashi T."/>
            <person name="Makino K."/>
            <person name="Ohnishi M."/>
            <person name="Kurokawa K."/>
            <person name="Ishii K."/>
            <person name="Yokoyama K."/>
            <person name="Han C.-G."/>
            <person name="Ohtsubo E."/>
            <person name="Nakayama K."/>
            <person name="Murata T."/>
            <person name="Tanaka M."/>
            <person name="Tobe T."/>
            <person name="Iida T."/>
            <person name="Takami H."/>
            <person name="Honda T."/>
            <person name="Sasakawa C."/>
            <person name="Ogasawara N."/>
            <person name="Yasunaga T."/>
            <person name="Kuhara S."/>
            <person name="Shiba T."/>
            <person name="Hattori M."/>
            <person name="Shinagawa H."/>
        </authorList>
    </citation>
    <scope>NUCLEOTIDE SEQUENCE [LARGE SCALE GENOMIC DNA]</scope>
    <source>
        <strain>O157:H7 / Sakai / RIMD 0509952 / EHEC</strain>
    </source>
</reference>
<dbReference type="EMBL" id="AE005174">
    <property type="protein sequence ID" value="AAG55408.1"/>
    <property type="molecule type" value="Genomic_DNA"/>
</dbReference>
<dbReference type="EMBL" id="BA000007">
    <property type="protein sequence ID" value="BAB34429.1"/>
    <property type="status" value="ALT_INIT"/>
    <property type="molecule type" value="Genomic_DNA"/>
</dbReference>
<dbReference type="PIR" id="D85618">
    <property type="entry name" value="D85618"/>
</dbReference>
<dbReference type="PIR" id="F90754">
    <property type="entry name" value="F90754"/>
</dbReference>
<dbReference type="RefSeq" id="NP_309033.1">
    <property type="nucleotide sequence ID" value="NC_002695.1"/>
</dbReference>
<dbReference type="SMR" id="Q8XDG1"/>
<dbReference type="STRING" id="155864.Z1270"/>
<dbReference type="GeneID" id="917749"/>
<dbReference type="KEGG" id="ece:Z1270"/>
<dbReference type="KEGG" id="ecs:ECs_1006"/>
<dbReference type="PATRIC" id="fig|386585.9.peg.1126"/>
<dbReference type="eggNOG" id="COG3095">
    <property type="taxonomic scope" value="Bacteria"/>
</dbReference>
<dbReference type="HOGENOM" id="CLU_1146408_0_0_6"/>
<dbReference type="Proteomes" id="UP000000558">
    <property type="component" value="Chromosome"/>
</dbReference>
<dbReference type="Proteomes" id="UP000002519">
    <property type="component" value="Chromosome"/>
</dbReference>
<dbReference type="GO" id="GO:0005737">
    <property type="term" value="C:cytoplasm"/>
    <property type="evidence" value="ECO:0007669"/>
    <property type="project" value="UniProtKB-UniRule"/>
</dbReference>
<dbReference type="GO" id="GO:0009295">
    <property type="term" value="C:nucleoid"/>
    <property type="evidence" value="ECO:0007669"/>
    <property type="project" value="UniProtKB-SubCell"/>
</dbReference>
<dbReference type="GO" id="GO:0051301">
    <property type="term" value="P:cell division"/>
    <property type="evidence" value="ECO:0007669"/>
    <property type="project" value="UniProtKB-KW"/>
</dbReference>
<dbReference type="GO" id="GO:0030261">
    <property type="term" value="P:chromosome condensation"/>
    <property type="evidence" value="ECO:0007669"/>
    <property type="project" value="UniProtKB-KW"/>
</dbReference>
<dbReference type="GO" id="GO:0007059">
    <property type="term" value="P:chromosome segregation"/>
    <property type="evidence" value="ECO:0007669"/>
    <property type="project" value="UniProtKB-UniRule"/>
</dbReference>
<dbReference type="GO" id="GO:0006260">
    <property type="term" value="P:DNA replication"/>
    <property type="evidence" value="ECO:0007669"/>
    <property type="project" value="UniProtKB-UniRule"/>
</dbReference>
<dbReference type="CDD" id="cd16336">
    <property type="entry name" value="MukE"/>
    <property type="match status" value="1"/>
</dbReference>
<dbReference type="Gene3D" id="1.10.10.2250">
    <property type="match status" value="1"/>
</dbReference>
<dbReference type="Gene3D" id="1.10.10.2260">
    <property type="entry name" value="MukE-like family, C-terminal domain"/>
    <property type="match status" value="1"/>
</dbReference>
<dbReference type="HAMAP" id="MF_01802">
    <property type="entry name" value="MukE"/>
    <property type="match status" value="1"/>
</dbReference>
<dbReference type="InterPro" id="IPR042037">
    <property type="entry name" value="MukE_C"/>
</dbReference>
<dbReference type="InterPro" id="IPR042038">
    <property type="entry name" value="MukE_N"/>
</dbReference>
<dbReference type="InterPro" id="IPR007385">
    <property type="entry name" value="Scp_MukE"/>
</dbReference>
<dbReference type="NCBIfam" id="NF003602">
    <property type="entry name" value="PRK05256.1"/>
    <property type="match status" value="1"/>
</dbReference>
<dbReference type="Pfam" id="PF04288">
    <property type="entry name" value="MukE"/>
    <property type="match status" value="1"/>
</dbReference>
<sequence length="225" mass="25998">MPVKLAQALANPLFPALDSALRSGRHIGLDELDNHAFLMDFQEYLEEFYARYNVELIRAPEGFFYLRPRSTTLIPRSVLSELDMMVGKILCYLYLSPERLANEGIFTQQELYDELLTLADEAKLLKLVNNRSTGSDIDRQKLQEKVRSSLNRLRRLGMVWFMGHDSSKFRITESVFRFGADVRAGDDPREAQRRLIRDGEAMPIENHLQLNDETEENQPDSGEEE</sequence>
<keyword id="KW-0131">Cell cycle</keyword>
<keyword id="KW-0132">Cell division</keyword>
<keyword id="KW-0159">Chromosome partition</keyword>
<keyword id="KW-0963">Cytoplasm</keyword>
<keyword id="KW-0226">DNA condensation</keyword>
<keyword id="KW-1185">Reference proteome</keyword>
<name>MUKE_ECO57</name>
<comment type="function">
    <text evidence="1">Involved in chromosome condensation, segregation and cell cycle progression. May participate in facilitating chromosome segregation by condensation DNA from both sides of a centrally located replisome during cell division. Probably acts via its interaction with MukB and MukF.</text>
</comment>
<comment type="subunit">
    <text evidence="1">Interacts, and probably forms a ternary complex, with MukF and MukB. The complex formation is stimulated by calcium or magnesium.</text>
</comment>
<comment type="subcellular location">
    <subcellularLocation>
        <location evidence="1">Cytoplasm</location>
        <location evidence="1">Nucleoid</location>
    </subcellularLocation>
    <text evidence="1">Restricted to the nucleoid region.</text>
</comment>
<comment type="similarity">
    <text evidence="1">Belongs to the MukE family.</text>
</comment>
<comment type="sequence caution" evidence="3">
    <conflict type="erroneous initiation">
        <sequence resource="EMBL-CDS" id="BAB34429"/>
    </conflict>
</comment>
<evidence type="ECO:0000255" key="1">
    <source>
        <dbReference type="HAMAP-Rule" id="MF_01802"/>
    </source>
</evidence>
<evidence type="ECO:0000256" key="2">
    <source>
        <dbReference type="SAM" id="MobiDB-lite"/>
    </source>
</evidence>
<evidence type="ECO:0000305" key="3"/>
<feature type="chain" id="PRO_0000206794" description="Chromosome partition protein MukE">
    <location>
        <begin position="1"/>
        <end position="225"/>
    </location>
</feature>
<feature type="region of interest" description="Disordered" evidence="2">
    <location>
        <begin position="197"/>
        <end position="225"/>
    </location>
</feature>
<feature type="compositionally biased region" description="Acidic residues" evidence="2">
    <location>
        <begin position="212"/>
        <end position="225"/>
    </location>
</feature>
<proteinExistence type="inferred from homology"/>
<protein>
    <recommendedName>
        <fullName evidence="1">Chromosome partition protein MukE</fullName>
    </recommendedName>
</protein>
<gene>
    <name evidence="1" type="primary">mukE</name>
    <name type="ordered locus">Z1270</name>
    <name type="ordered locus">ECs1006</name>
</gene>
<accession>Q8XDG1</accession>